<comment type="function">
    <text>Present in the aqueous fluid surrounding olfactory sensory dendrites and are thought to aid in the capture and transport of hydrophobic odorants into and through this fluid.</text>
</comment>
<comment type="subunit">
    <text evidence="3">Homodimer.</text>
</comment>
<comment type="tissue specificity">
    <text>Olfactory tissue; expressed by the glia-like support cells that ensheathe the sensory neurons and line the base of the sensillum lumen.</text>
</comment>
<comment type="similarity">
    <text evidence="3">Belongs to the PBP/GOBP family.</text>
</comment>
<organism>
    <name type="scientific">Manduca sexta</name>
    <name type="common">Tobacco hawkmoth</name>
    <name type="synonym">Tobacco hornworm</name>
    <dbReference type="NCBI Taxonomy" id="7130"/>
    <lineage>
        <taxon>Eukaryota</taxon>
        <taxon>Metazoa</taxon>
        <taxon>Ecdysozoa</taxon>
        <taxon>Arthropoda</taxon>
        <taxon>Hexapoda</taxon>
        <taxon>Insecta</taxon>
        <taxon>Pterygota</taxon>
        <taxon>Neoptera</taxon>
        <taxon>Endopterygota</taxon>
        <taxon>Lepidoptera</taxon>
        <taxon>Glossata</taxon>
        <taxon>Ditrysia</taxon>
        <taxon>Bombycoidea</taxon>
        <taxon>Sphingidae</taxon>
        <taxon>Sphinginae</taxon>
        <taxon>Sphingini</taxon>
        <taxon>Manduca</taxon>
    </lineage>
</organism>
<dbReference type="EMBL" id="M73798">
    <property type="protein sequence ID" value="AAA29316.1"/>
    <property type="molecule type" value="mRNA"/>
</dbReference>
<dbReference type="PIR" id="A44821">
    <property type="entry name" value="A44821"/>
</dbReference>
<dbReference type="SMR" id="P31419"/>
<dbReference type="OrthoDB" id="7325081at2759"/>
<dbReference type="GO" id="GO:0005549">
    <property type="term" value="F:odorant binding"/>
    <property type="evidence" value="ECO:0007669"/>
    <property type="project" value="InterPro"/>
</dbReference>
<dbReference type="GO" id="GO:0007608">
    <property type="term" value="P:sensory perception of smell"/>
    <property type="evidence" value="ECO:0007669"/>
    <property type="project" value="UniProtKB-KW"/>
</dbReference>
<dbReference type="CDD" id="cd23992">
    <property type="entry name" value="PBP_GOBP"/>
    <property type="match status" value="1"/>
</dbReference>
<dbReference type="Gene3D" id="1.10.238.20">
    <property type="entry name" value="Pheromone/general odorant binding protein domain"/>
    <property type="match status" value="1"/>
</dbReference>
<dbReference type="InterPro" id="IPR006072">
    <property type="entry name" value="Odorant/phero-bd_Lep"/>
</dbReference>
<dbReference type="InterPro" id="IPR006170">
    <property type="entry name" value="PBP/GOBP"/>
</dbReference>
<dbReference type="InterPro" id="IPR036728">
    <property type="entry name" value="PBP_GOBP_sf"/>
</dbReference>
<dbReference type="Pfam" id="PF01395">
    <property type="entry name" value="PBP_GOBP"/>
    <property type="match status" value="1"/>
</dbReference>
<dbReference type="PIRSF" id="PIRSF015604">
    <property type="entry name" value="Odorant/phero_bd"/>
    <property type="match status" value="1"/>
</dbReference>
<dbReference type="PRINTS" id="PR00484">
    <property type="entry name" value="PBPGOBP"/>
</dbReference>
<dbReference type="SMART" id="SM00708">
    <property type="entry name" value="PhBP"/>
    <property type="match status" value="1"/>
</dbReference>
<dbReference type="SUPFAM" id="SSF47565">
    <property type="entry name" value="Insect pheromone/odorant-binding proteins"/>
    <property type="match status" value="1"/>
</dbReference>
<evidence type="ECO:0000250" key="1"/>
<evidence type="ECO:0000269" key="2">
    <source>
    </source>
</evidence>
<evidence type="ECO:0000305" key="3"/>
<feature type="signal peptide" evidence="2">
    <location>
        <begin position="1"/>
        <end position="20"/>
    </location>
</feature>
<feature type="chain" id="PRO_0000012585" description="General odorant-binding protein 2">
    <location>
        <begin position="21"/>
        <end position="161"/>
    </location>
</feature>
<feature type="disulfide bond" evidence="1">
    <location>
        <begin position="39"/>
        <end position="74"/>
    </location>
</feature>
<feature type="disulfide bond" evidence="1">
    <location>
        <begin position="70"/>
        <end position="128"/>
    </location>
</feature>
<feature type="disulfide bond" evidence="1">
    <location>
        <begin position="117"/>
        <end position="137"/>
    </location>
</feature>
<keyword id="KW-0903">Direct protein sequencing</keyword>
<keyword id="KW-1015">Disulfide bond</keyword>
<keyword id="KW-0552">Olfaction</keyword>
<keyword id="KW-0716">Sensory transduction</keyword>
<keyword id="KW-0732">Signal</keyword>
<keyword id="KW-0813">Transport</keyword>
<reference key="1">
    <citation type="journal article" date="1991" name="J. Neurosci.">
        <title>Molecular cloning and sequencing of general odorant-binding proteins GOBP1 and GOBP2 from the tobacco hawk moth Manduca sexta: comparisons with other insect OBPs and their signal peptides.</title>
        <authorList>
            <person name="Vogt R.G."/>
            <person name="Rybczynski R."/>
            <person name="Lerner M.R."/>
        </authorList>
    </citation>
    <scope>NUCLEOTIDE SEQUENCE [MRNA]</scope>
</reference>
<reference key="2">
    <citation type="journal article" date="1991" name="J. Neurobiol.">
        <title>Odorant-binding-protein subfamilies associate with distinct classes of olfactory receptor neurons in insects.</title>
        <authorList>
            <person name="Vogt R.G."/>
            <person name="Prestwich G.D."/>
            <person name="Lerner M.R."/>
        </authorList>
    </citation>
    <scope>PROTEIN SEQUENCE OF 21-38</scope>
</reference>
<proteinExistence type="evidence at protein level"/>
<sequence>MVNRLILMVVVVFITDSVMGTAEVMSHVTAHFGKALEECREESGLPVEVMDEFKHFWREDFEVVHRELGCAIICMSNKFELLQDDTRIHHVKMHDYIKSFPNGQVLSEKMVQLIHNCEKQYDDIADDCDRVVKVAACFKKDAKKEGIAPEVAMIEAVIEKY</sequence>
<accession>P31419</accession>
<name>OBP2_MANSE</name>
<protein>
    <recommendedName>
        <fullName>General odorant-binding protein 2</fullName>
        <shortName>GOBP 2</shortName>
    </recommendedName>
</protein>
<gene>
    <name type="primary">GOBP2</name>
</gene>